<dbReference type="EC" id="2.3.1.109"/>
<dbReference type="EMBL" id="U00096">
    <property type="protein sequence ID" value="AAC74817.1"/>
    <property type="molecule type" value="Genomic_DNA"/>
</dbReference>
<dbReference type="EMBL" id="AP009048">
    <property type="protein sequence ID" value="BAE76517.1"/>
    <property type="molecule type" value="Genomic_DNA"/>
</dbReference>
<dbReference type="PIR" id="C64934">
    <property type="entry name" value="C64934"/>
</dbReference>
<dbReference type="RefSeq" id="NP_416261.1">
    <property type="nucleotide sequence ID" value="NC_000913.3"/>
</dbReference>
<dbReference type="RefSeq" id="WP_000989419.1">
    <property type="nucleotide sequence ID" value="NZ_SSZK01000001.1"/>
</dbReference>
<dbReference type="SMR" id="P0AE37"/>
<dbReference type="BioGRID" id="4262235">
    <property type="interactions" value="14"/>
</dbReference>
<dbReference type="FunCoup" id="P0AE37">
    <property type="interactions" value="42"/>
</dbReference>
<dbReference type="IntAct" id="P0AE37">
    <property type="interactions" value="6"/>
</dbReference>
<dbReference type="STRING" id="511145.b1747"/>
<dbReference type="jPOST" id="P0AE37"/>
<dbReference type="PaxDb" id="511145-b1747"/>
<dbReference type="EnsemblBacteria" id="AAC74817">
    <property type="protein sequence ID" value="AAC74817"/>
    <property type="gene ID" value="b1747"/>
</dbReference>
<dbReference type="GeneID" id="75171814"/>
<dbReference type="GeneID" id="946261"/>
<dbReference type="KEGG" id="ecj:JW1736"/>
<dbReference type="KEGG" id="eco:b1747"/>
<dbReference type="KEGG" id="ecoc:C3026_09980"/>
<dbReference type="PATRIC" id="fig|1411691.4.peg.509"/>
<dbReference type="EchoBASE" id="EB3754"/>
<dbReference type="eggNOG" id="COG3138">
    <property type="taxonomic scope" value="Bacteria"/>
</dbReference>
<dbReference type="HOGENOM" id="CLU_057655_0_0_6"/>
<dbReference type="InParanoid" id="P0AE37"/>
<dbReference type="OMA" id="FDGGPHF"/>
<dbReference type="OrthoDB" id="21121at2"/>
<dbReference type="PhylomeDB" id="P0AE37"/>
<dbReference type="BioCyc" id="EcoCyc:ARGSUCCTRAN-MONOMER"/>
<dbReference type="BioCyc" id="MetaCyc:ARGSUCCTRAN-MONOMER"/>
<dbReference type="UniPathway" id="UPA00185">
    <property type="reaction ID" value="UER00279"/>
</dbReference>
<dbReference type="PRO" id="PR:P0AE37"/>
<dbReference type="Proteomes" id="UP000000625">
    <property type="component" value="Chromosome"/>
</dbReference>
<dbReference type="GO" id="GO:0008791">
    <property type="term" value="F:arginine N-succinyltransferase activity"/>
    <property type="evidence" value="ECO:0007669"/>
    <property type="project" value="UniProtKB-UniRule"/>
</dbReference>
<dbReference type="GO" id="GO:0009015">
    <property type="term" value="F:N-succinylarginine dihydrolase activity"/>
    <property type="evidence" value="ECO:0000318"/>
    <property type="project" value="GO_Central"/>
</dbReference>
<dbReference type="GO" id="GO:0006527">
    <property type="term" value="P:arginine catabolic process"/>
    <property type="evidence" value="ECO:0000318"/>
    <property type="project" value="GO_Central"/>
</dbReference>
<dbReference type="GO" id="GO:0019544">
    <property type="term" value="P:arginine catabolic process to glutamate"/>
    <property type="evidence" value="ECO:0007669"/>
    <property type="project" value="UniProtKB-UniRule"/>
</dbReference>
<dbReference type="GO" id="GO:0019545">
    <property type="term" value="P:arginine catabolic process to succinate"/>
    <property type="evidence" value="ECO:0007669"/>
    <property type="project" value="UniProtKB-UniRule"/>
</dbReference>
<dbReference type="Gene3D" id="2.40.40.20">
    <property type="match status" value="1"/>
</dbReference>
<dbReference type="Gene3D" id="3.40.630.30">
    <property type="match status" value="1"/>
</dbReference>
<dbReference type="HAMAP" id="MF_01171">
    <property type="entry name" value="AstA"/>
    <property type="match status" value="1"/>
</dbReference>
<dbReference type="InterPro" id="IPR016181">
    <property type="entry name" value="Acyl_CoA_acyltransferase"/>
</dbReference>
<dbReference type="InterPro" id="IPR007041">
    <property type="entry name" value="Arg_succinylTrfase_AstA/AruG"/>
</dbReference>
<dbReference type="InterPro" id="IPR017650">
    <property type="entry name" value="Arginine_N-succinylTrfase"/>
</dbReference>
<dbReference type="NCBIfam" id="TIGR03243">
    <property type="entry name" value="arg_catab_AOST"/>
    <property type="match status" value="1"/>
</dbReference>
<dbReference type="NCBIfam" id="TIGR03244">
    <property type="entry name" value="arg_catab_AstA"/>
    <property type="match status" value="1"/>
</dbReference>
<dbReference type="NCBIfam" id="NF007770">
    <property type="entry name" value="PRK10456.1"/>
    <property type="match status" value="1"/>
</dbReference>
<dbReference type="PANTHER" id="PTHR30420:SF1">
    <property type="entry name" value="ARGININE N-SUCCINYLTRANSFERASE"/>
    <property type="match status" value="1"/>
</dbReference>
<dbReference type="PANTHER" id="PTHR30420">
    <property type="entry name" value="N-SUCCINYLARGININE DIHYDROLASE"/>
    <property type="match status" value="1"/>
</dbReference>
<dbReference type="Pfam" id="PF04958">
    <property type="entry name" value="AstA"/>
    <property type="match status" value="1"/>
</dbReference>
<dbReference type="SUPFAM" id="SSF55729">
    <property type="entry name" value="Acyl-CoA N-acyltransferases (Nat)"/>
    <property type="match status" value="1"/>
</dbReference>
<accession>P0AE37</accession>
<accession>P76218</accession>
<accession>Q2MB39</accession>
<feature type="chain" id="PRO_0000064712" description="Arginine N-succinyltransferase">
    <location>
        <begin position="1"/>
        <end position="344"/>
    </location>
</feature>
<feature type="active site" description="Proton donor" evidence="1">
    <location>
        <position position="229"/>
    </location>
</feature>
<feature type="binding site" evidence="1">
    <location>
        <position position="125"/>
    </location>
    <ligand>
        <name>succinyl-CoA</name>
        <dbReference type="ChEBI" id="CHEBI:57292"/>
    </ligand>
</feature>
<evidence type="ECO:0000255" key="1"/>
<evidence type="ECO:0000269" key="2">
    <source>
    </source>
</evidence>
<evidence type="ECO:0000269" key="3">
    <source>
    </source>
</evidence>
<evidence type="ECO:0000305" key="4"/>
<proteinExistence type="evidence at transcript level"/>
<reference key="1">
    <citation type="journal article" date="1997" name="Science">
        <title>The complete genome sequence of Escherichia coli K-12.</title>
        <authorList>
            <person name="Blattner F.R."/>
            <person name="Plunkett G. III"/>
            <person name="Bloch C.A."/>
            <person name="Perna N.T."/>
            <person name="Burland V."/>
            <person name="Riley M."/>
            <person name="Collado-Vides J."/>
            <person name="Glasner J.D."/>
            <person name="Rode C.K."/>
            <person name="Mayhew G.F."/>
            <person name="Gregor J."/>
            <person name="Davis N.W."/>
            <person name="Kirkpatrick H.A."/>
            <person name="Goeden M.A."/>
            <person name="Rose D.J."/>
            <person name="Mau B."/>
            <person name="Shao Y."/>
        </authorList>
    </citation>
    <scope>NUCLEOTIDE SEQUENCE [LARGE SCALE GENOMIC DNA]</scope>
    <source>
        <strain>K12 / MG1655 / ATCC 47076</strain>
    </source>
</reference>
<reference key="2">
    <citation type="journal article" date="2006" name="Mol. Syst. Biol.">
        <title>Highly accurate genome sequences of Escherichia coli K-12 strains MG1655 and W3110.</title>
        <authorList>
            <person name="Hayashi K."/>
            <person name="Morooka N."/>
            <person name="Yamamoto Y."/>
            <person name="Fujita K."/>
            <person name="Isono K."/>
            <person name="Choi S."/>
            <person name="Ohtsubo E."/>
            <person name="Baba T."/>
            <person name="Wanner B.L."/>
            <person name="Mori H."/>
            <person name="Horiuchi T."/>
        </authorList>
    </citation>
    <scope>NUCLEOTIDE SEQUENCE [LARGE SCALE GENOMIC DNA]</scope>
    <source>
        <strain>K12 / W3110 / ATCC 27325 / DSM 5911</strain>
    </source>
</reference>
<reference key="3">
    <citation type="journal article" date="1998" name="J. Bacteriol.">
        <title>Arginine catabolism and the arginine succinyltransferase pathway in Escherichia coli.</title>
        <authorList>
            <person name="Schneider B.L."/>
            <person name="Kiupakis A.K."/>
            <person name="Reitzer L.J."/>
        </authorList>
    </citation>
    <scope>FUNCTION</scope>
</reference>
<reference key="4">
    <citation type="journal article" date="2002" name="J. Bacteriol.">
        <title>ArgR-independent induction and ArgR-dependent superinduction of the astCADBE operon in Escherichia coli.</title>
        <authorList>
            <person name="Kiupakis A.K."/>
            <person name="Reitzer L."/>
        </authorList>
    </citation>
    <scope>INDUCTION</scope>
</reference>
<reference key="5">
    <citation type="journal article" date="2003" name="FEBS Lett.">
        <title>Prediction of the structure and function of AstA and AstB, the first two enzymes of the arginine succinyltransferase pathway of arginine catabolism.</title>
        <authorList>
            <person name="Shirai H."/>
            <person name="Mizuguchi K."/>
        </authorList>
    </citation>
    <scope>3D-STRUCTURE MODELING</scope>
    <scope>REACTION MECHANISM</scope>
</reference>
<organism>
    <name type="scientific">Escherichia coli (strain K12)</name>
    <dbReference type="NCBI Taxonomy" id="83333"/>
    <lineage>
        <taxon>Bacteria</taxon>
        <taxon>Pseudomonadati</taxon>
        <taxon>Pseudomonadota</taxon>
        <taxon>Gammaproteobacteria</taxon>
        <taxon>Enterobacterales</taxon>
        <taxon>Enterobacteriaceae</taxon>
        <taxon>Escherichia</taxon>
    </lineage>
</organism>
<comment type="function">
    <text evidence="3">Catalyzes the transfer of succinyl-CoA to arginine to produce N(2)-succinylarginine.</text>
</comment>
<comment type="catalytic activity">
    <reaction>
        <text>succinyl-CoA + L-arginine = N(2)-succinyl-L-arginine + CoA + H(+)</text>
        <dbReference type="Rhea" id="RHEA:15185"/>
        <dbReference type="ChEBI" id="CHEBI:15378"/>
        <dbReference type="ChEBI" id="CHEBI:32682"/>
        <dbReference type="ChEBI" id="CHEBI:57287"/>
        <dbReference type="ChEBI" id="CHEBI:57292"/>
        <dbReference type="ChEBI" id="CHEBI:58241"/>
        <dbReference type="EC" id="2.3.1.109"/>
    </reaction>
</comment>
<comment type="pathway">
    <text>Amino-acid degradation; L-arginine degradation via AST pathway; L-glutamate and succinate from L-arginine: step 1/5.</text>
</comment>
<comment type="induction">
    <text evidence="2">By nitrogen starvation, and arginine. Induced at stationary phase by sigma S.</text>
</comment>
<comment type="similarity">
    <text evidence="4">Belongs to the arginine N-succinyltransferase family.</text>
</comment>
<name>ASTA_ECOLI</name>
<keyword id="KW-0012">Acyltransferase</keyword>
<keyword id="KW-0056">Arginine metabolism</keyword>
<keyword id="KW-1185">Reference proteome</keyword>
<keyword id="KW-0346">Stress response</keyword>
<keyword id="KW-0808">Transferase</keyword>
<gene>
    <name type="primary">astA</name>
    <name type="synonym">ydjV</name>
    <name type="ordered locus">b1747</name>
    <name type="ordered locus">JW1736</name>
</gene>
<protein>
    <recommendedName>
        <fullName>Arginine N-succinyltransferase</fullName>
        <shortName>AST</shortName>
        <ecNumber>2.3.1.109</ecNumber>
    </recommendedName>
    <alternativeName>
        <fullName>AOST</fullName>
    </alternativeName>
</protein>
<sequence length="344" mass="38456">MMVIRPVERSDVSALMQLASKTGGGLTSLPANEATLSARIERAIKTWQGELPKSEQGYVFVLEDSETGTVAGICAIEVAVGLNDPWYNYRVGTLVHASKELNVYNALPTLFLSNDHTGSSELCTLFLDPDWRKEGNGYLLSKSRFMFMAAFRDKFNDKVVAEMRGVIDEHGYSPFWQSLGKRFFSMDFSRADFLCGTGQKAFIAELMPKHPIYTHFLSQEAQDVIGQVHPQTAPARAVLEKEGFRYRNYIDIFDGGPTLECDIDRVRAIRKSRLVEVAEGQPAQGDFPACLVANENYHHFRVVLVRTDPATERLILTAAQLDALKCHAGDRVRLVRLCAEEKTA</sequence>